<keyword id="KW-1185">Reference proteome</keyword>
<protein>
    <recommendedName>
        <fullName evidence="1">UPF0246 protein Jann_0444</fullName>
    </recommendedName>
</protein>
<name>Y444_JANSC</name>
<reference key="1">
    <citation type="submission" date="2006-02" db="EMBL/GenBank/DDBJ databases">
        <title>Complete sequence of chromosome of Jannaschia sp. CCS1.</title>
        <authorList>
            <consortium name="US DOE Joint Genome Institute"/>
            <person name="Copeland A."/>
            <person name="Lucas S."/>
            <person name="Lapidus A."/>
            <person name="Barry K."/>
            <person name="Detter J.C."/>
            <person name="Glavina del Rio T."/>
            <person name="Hammon N."/>
            <person name="Israni S."/>
            <person name="Pitluck S."/>
            <person name="Brettin T."/>
            <person name="Bruce D."/>
            <person name="Han C."/>
            <person name="Tapia R."/>
            <person name="Gilna P."/>
            <person name="Chertkov O."/>
            <person name="Saunders E."/>
            <person name="Schmutz J."/>
            <person name="Larimer F."/>
            <person name="Land M."/>
            <person name="Kyrpides N."/>
            <person name="Lykidis A."/>
            <person name="Moran M.A."/>
            <person name="Belas R."/>
            <person name="Ye W."/>
            <person name="Buchan A."/>
            <person name="Gonzalez J.M."/>
            <person name="Schell M.A."/>
            <person name="Richardson P."/>
        </authorList>
    </citation>
    <scope>NUCLEOTIDE SEQUENCE [LARGE SCALE GENOMIC DNA]</scope>
    <source>
        <strain>CCS1</strain>
    </source>
</reference>
<dbReference type="EMBL" id="CP000264">
    <property type="protein sequence ID" value="ABD53361.1"/>
    <property type="molecule type" value="Genomic_DNA"/>
</dbReference>
<dbReference type="RefSeq" id="WP_011453570.1">
    <property type="nucleotide sequence ID" value="NC_007802.1"/>
</dbReference>
<dbReference type="SMR" id="Q28VA1"/>
<dbReference type="STRING" id="290400.Jann_0444"/>
<dbReference type="KEGG" id="jan:Jann_0444"/>
<dbReference type="eggNOG" id="COG3022">
    <property type="taxonomic scope" value="Bacteria"/>
</dbReference>
<dbReference type="HOGENOM" id="CLU_061989_0_0_5"/>
<dbReference type="OrthoDB" id="9777133at2"/>
<dbReference type="Proteomes" id="UP000008326">
    <property type="component" value="Chromosome"/>
</dbReference>
<dbReference type="GO" id="GO:0005829">
    <property type="term" value="C:cytosol"/>
    <property type="evidence" value="ECO:0007669"/>
    <property type="project" value="TreeGrafter"/>
</dbReference>
<dbReference type="GO" id="GO:0033194">
    <property type="term" value="P:response to hydroperoxide"/>
    <property type="evidence" value="ECO:0007669"/>
    <property type="project" value="TreeGrafter"/>
</dbReference>
<dbReference type="HAMAP" id="MF_00652">
    <property type="entry name" value="UPF0246"/>
    <property type="match status" value="1"/>
</dbReference>
<dbReference type="InterPro" id="IPR005583">
    <property type="entry name" value="YaaA"/>
</dbReference>
<dbReference type="NCBIfam" id="NF002542">
    <property type="entry name" value="PRK02101.1-3"/>
    <property type="match status" value="1"/>
</dbReference>
<dbReference type="PANTHER" id="PTHR30283:SF4">
    <property type="entry name" value="PEROXIDE STRESS RESISTANCE PROTEIN YAAA"/>
    <property type="match status" value="1"/>
</dbReference>
<dbReference type="PANTHER" id="PTHR30283">
    <property type="entry name" value="PEROXIDE STRESS RESPONSE PROTEIN YAAA"/>
    <property type="match status" value="1"/>
</dbReference>
<dbReference type="Pfam" id="PF03883">
    <property type="entry name" value="H2O2_YaaD"/>
    <property type="match status" value="1"/>
</dbReference>
<organism>
    <name type="scientific">Jannaschia sp. (strain CCS1)</name>
    <dbReference type="NCBI Taxonomy" id="290400"/>
    <lineage>
        <taxon>Bacteria</taxon>
        <taxon>Pseudomonadati</taxon>
        <taxon>Pseudomonadota</taxon>
        <taxon>Alphaproteobacteria</taxon>
        <taxon>Rhodobacterales</taxon>
        <taxon>Roseobacteraceae</taxon>
        <taxon>Jannaschia</taxon>
    </lineage>
</organism>
<accession>Q28VA1</accession>
<feature type="chain" id="PRO_0000262025" description="UPF0246 protein Jann_0444">
    <location>
        <begin position="1"/>
        <end position="258"/>
    </location>
</feature>
<evidence type="ECO:0000255" key="1">
    <source>
        <dbReference type="HAMAP-Rule" id="MF_00652"/>
    </source>
</evidence>
<proteinExistence type="inferred from homology"/>
<gene>
    <name type="ordered locus">Jann_0444</name>
</gene>
<sequence>MLTVISPAKRLDWAKRELATTAPDFMDDAVTLARAAKRLSQADLRKLMDISADLAKLNADRFKVFEEAPEGERPAALAFAGDTYIGLEATSLDADTMDYAQDHLRILSGLYGLLRPLDAIRPYRLEMGSRLKTRKGPSLYAYWGPRLAQALNVQAKAVDTKTLINCASVEYFSAVDEKALDLDIVTPQFFEDKPGGPKIVSFFAKKARGAMARFVQERRLTSPHQILDFDTGGYSHAPDLSAPGKPAFLRSEAAQKAA</sequence>
<comment type="similarity">
    <text evidence="1">Belongs to the UPF0246 family.</text>
</comment>